<protein>
    <recommendedName>
        <fullName evidence="1">dITP/XTP pyrophosphatase</fullName>
        <ecNumber evidence="1">3.6.1.66</ecNumber>
    </recommendedName>
    <alternativeName>
        <fullName evidence="1">Non-canonical purine NTP pyrophosphatase</fullName>
    </alternativeName>
    <alternativeName>
        <fullName evidence="1">Non-standard purine NTP pyrophosphatase</fullName>
    </alternativeName>
    <alternativeName>
        <fullName evidence="1">Nucleoside-triphosphate diphosphatase</fullName>
    </alternativeName>
    <alternativeName>
        <fullName evidence="1">Nucleoside-triphosphate pyrophosphatase</fullName>
        <shortName evidence="1">NTPase</shortName>
    </alternativeName>
</protein>
<comment type="function">
    <text evidence="1">Pyrophosphatase that catalyzes the hydrolysis of nucleoside triphosphates to their monophosphate derivatives, with a high preference for the non-canonical purine nucleotides XTP (xanthosine triphosphate), dITP (deoxyinosine triphosphate) and ITP. Seems to function as a house-cleaning enzyme that removes non-canonical purine nucleotides from the nucleotide pool, thus preventing their incorporation into DNA/RNA and avoiding chromosomal lesions.</text>
</comment>
<comment type="catalytic activity">
    <reaction evidence="1">
        <text>XTP + H2O = XMP + diphosphate + H(+)</text>
        <dbReference type="Rhea" id="RHEA:28610"/>
        <dbReference type="ChEBI" id="CHEBI:15377"/>
        <dbReference type="ChEBI" id="CHEBI:15378"/>
        <dbReference type="ChEBI" id="CHEBI:33019"/>
        <dbReference type="ChEBI" id="CHEBI:57464"/>
        <dbReference type="ChEBI" id="CHEBI:61314"/>
        <dbReference type="EC" id="3.6.1.66"/>
    </reaction>
</comment>
<comment type="catalytic activity">
    <reaction evidence="1">
        <text>dITP + H2O = dIMP + diphosphate + H(+)</text>
        <dbReference type="Rhea" id="RHEA:28342"/>
        <dbReference type="ChEBI" id="CHEBI:15377"/>
        <dbReference type="ChEBI" id="CHEBI:15378"/>
        <dbReference type="ChEBI" id="CHEBI:33019"/>
        <dbReference type="ChEBI" id="CHEBI:61194"/>
        <dbReference type="ChEBI" id="CHEBI:61382"/>
        <dbReference type="EC" id="3.6.1.66"/>
    </reaction>
</comment>
<comment type="catalytic activity">
    <reaction evidence="1">
        <text>ITP + H2O = IMP + diphosphate + H(+)</text>
        <dbReference type="Rhea" id="RHEA:29399"/>
        <dbReference type="ChEBI" id="CHEBI:15377"/>
        <dbReference type="ChEBI" id="CHEBI:15378"/>
        <dbReference type="ChEBI" id="CHEBI:33019"/>
        <dbReference type="ChEBI" id="CHEBI:58053"/>
        <dbReference type="ChEBI" id="CHEBI:61402"/>
        <dbReference type="EC" id="3.6.1.66"/>
    </reaction>
</comment>
<comment type="cofactor">
    <cofactor evidence="1">
        <name>Mg(2+)</name>
        <dbReference type="ChEBI" id="CHEBI:18420"/>
    </cofactor>
    <text evidence="1">Binds 1 Mg(2+) ion per subunit.</text>
</comment>
<comment type="subunit">
    <text evidence="1">Homodimer.</text>
</comment>
<comment type="similarity">
    <text evidence="1">Belongs to the HAM1 NTPase family.</text>
</comment>
<reference key="1">
    <citation type="journal article" date="2004" name="Proc. Natl. Acad. Sci. U.S.A.">
        <title>Genome sequence of the deep-sea gamma-proteobacterium Idiomarina loihiensis reveals amino acid fermentation as a source of carbon and energy.</title>
        <authorList>
            <person name="Hou S."/>
            <person name="Saw J.H."/>
            <person name="Lee K.S."/>
            <person name="Freitas T.A."/>
            <person name="Belisle C."/>
            <person name="Kawarabayasi Y."/>
            <person name="Donachie S.P."/>
            <person name="Pikina A."/>
            <person name="Galperin M.Y."/>
            <person name="Koonin E.V."/>
            <person name="Makarova K.S."/>
            <person name="Omelchenko M.V."/>
            <person name="Sorokin A."/>
            <person name="Wolf Y.I."/>
            <person name="Li Q.X."/>
            <person name="Keum Y.S."/>
            <person name="Campbell S."/>
            <person name="Denery J."/>
            <person name="Aizawa S."/>
            <person name="Shibata S."/>
            <person name="Malahoff A."/>
            <person name="Alam M."/>
        </authorList>
    </citation>
    <scope>NUCLEOTIDE SEQUENCE [LARGE SCALE GENOMIC DNA]</scope>
    <source>
        <strain>ATCC BAA-735 / DSM 15497 / L2-TR</strain>
    </source>
</reference>
<evidence type="ECO:0000255" key="1">
    <source>
        <dbReference type="HAMAP-Rule" id="MF_01405"/>
    </source>
</evidence>
<sequence>MSQNTLVLATGNAGKVAELRHMLSQTHATADWLVRPQSEWDFAEADETGTTFVENAIIKARHACQQTGLPAIADDSGLAVTALNGAPGVYSARYAGGNATDSDNINKLLKALEGVEESQRQASFHCVLVYMQSAEDPTPIICQGRWDGHILTHPVGEEGFGYDPVFWVKEKNCSAAQLSKTEKQALSHRGQALKQLLEQLAK</sequence>
<organism>
    <name type="scientific">Idiomarina loihiensis (strain ATCC BAA-735 / DSM 15497 / L2-TR)</name>
    <dbReference type="NCBI Taxonomy" id="283942"/>
    <lineage>
        <taxon>Bacteria</taxon>
        <taxon>Pseudomonadati</taxon>
        <taxon>Pseudomonadota</taxon>
        <taxon>Gammaproteobacteria</taxon>
        <taxon>Alteromonadales</taxon>
        <taxon>Idiomarinaceae</taxon>
        <taxon>Idiomarina</taxon>
    </lineage>
</organism>
<feature type="chain" id="PRO_0000178176" description="dITP/XTP pyrophosphatase">
    <location>
        <begin position="1"/>
        <end position="202"/>
    </location>
</feature>
<feature type="active site" description="Proton acceptor" evidence="1">
    <location>
        <position position="75"/>
    </location>
</feature>
<feature type="binding site" evidence="1">
    <location>
        <begin position="10"/>
        <end position="15"/>
    </location>
    <ligand>
        <name>substrate</name>
    </ligand>
</feature>
<feature type="binding site" evidence="1">
    <location>
        <position position="46"/>
    </location>
    <ligand>
        <name>Mg(2+)</name>
        <dbReference type="ChEBI" id="CHEBI:18420"/>
    </ligand>
</feature>
<feature type="binding site" evidence="1">
    <location>
        <position position="75"/>
    </location>
    <ligand>
        <name>Mg(2+)</name>
        <dbReference type="ChEBI" id="CHEBI:18420"/>
    </ligand>
</feature>
<feature type="binding site" evidence="1">
    <location>
        <position position="76"/>
    </location>
    <ligand>
        <name>substrate</name>
    </ligand>
</feature>
<feature type="binding site" evidence="1">
    <location>
        <begin position="160"/>
        <end position="163"/>
    </location>
    <ligand>
        <name>substrate</name>
    </ligand>
</feature>
<feature type="binding site" evidence="1">
    <location>
        <position position="183"/>
    </location>
    <ligand>
        <name>substrate</name>
    </ligand>
</feature>
<feature type="binding site" evidence="1">
    <location>
        <begin position="188"/>
        <end position="189"/>
    </location>
    <ligand>
        <name>substrate</name>
    </ligand>
</feature>
<gene>
    <name type="ordered locus">IL1979</name>
</gene>
<name>IXTPA_IDILO</name>
<proteinExistence type="inferred from homology"/>
<accession>Q5QY51</accession>
<dbReference type="EC" id="3.6.1.66" evidence="1"/>
<dbReference type="EMBL" id="AE017340">
    <property type="protein sequence ID" value="AAV82811.1"/>
    <property type="molecule type" value="Genomic_DNA"/>
</dbReference>
<dbReference type="SMR" id="Q5QY51"/>
<dbReference type="STRING" id="283942.IL1979"/>
<dbReference type="GeneID" id="41337169"/>
<dbReference type="KEGG" id="ilo:IL1979"/>
<dbReference type="eggNOG" id="COG0127">
    <property type="taxonomic scope" value="Bacteria"/>
</dbReference>
<dbReference type="HOGENOM" id="CLU_082080_0_3_6"/>
<dbReference type="OrthoDB" id="9807456at2"/>
<dbReference type="Proteomes" id="UP000001171">
    <property type="component" value="Chromosome"/>
</dbReference>
<dbReference type="GO" id="GO:0005829">
    <property type="term" value="C:cytosol"/>
    <property type="evidence" value="ECO:0007669"/>
    <property type="project" value="TreeGrafter"/>
</dbReference>
<dbReference type="GO" id="GO:0035870">
    <property type="term" value="F:dITP diphosphatase activity"/>
    <property type="evidence" value="ECO:0007669"/>
    <property type="project" value="RHEA"/>
</dbReference>
<dbReference type="GO" id="GO:0036220">
    <property type="term" value="F:ITP diphosphatase activity"/>
    <property type="evidence" value="ECO:0007669"/>
    <property type="project" value="UniProtKB-EC"/>
</dbReference>
<dbReference type="GO" id="GO:0046872">
    <property type="term" value="F:metal ion binding"/>
    <property type="evidence" value="ECO:0007669"/>
    <property type="project" value="UniProtKB-KW"/>
</dbReference>
<dbReference type="GO" id="GO:0000166">
    <property type="term" value="F:nucleotide binding"/>
    <property type="evidence" value="ECO:0007669"/>
    <property type="project" value="UniProtKB-KW"/>
</dbReference>
<dbReference type="GO" id="GO:0017111">
    <property type="term" value="F:ribonucleoside triphosphate phosphatase activity"/>
    <property type="evidence" value="ECO:0007669"/>
    <property type="project" value="InterPro"/>
</dbReference>
<dbReference type="GO" id="GO:0036222">
    <property type="term" value="F:XTP diphosphatase activity"/>
    <property type="evidence" value="ECO:0007669"/>
    <property type="project" value="RHEA"/>
</dbReference>
<dbReference type="GO" id="GO:0009117">
    <property type="term" value="P:nucleotide metabolic process"/>
    <property type="evidence" value="ECO:0007669"/>
    <property type="project" value="UniProtKB-KW"/>
</dbReference>
<dbReference type="GO" id="GO:0009146">
    <property type="term" value="P:purine nucleoside triphosphate catabolic process"/>
    <property type="evidence" value="ECO:0007669"/>
    <property type="project" value="UniProtKB-UniRule"/>
</dbReference>
<dbReference type="CDD" id="cd00515">
    <property type="entry name" value="HAM1"/>
    <property type="match status" value="1"/>
</dbReference>
<dbReference type="FunFam" id="3.90.950.10:FF:000001">
    <property type="entry name" value="dITP/XTP pyrophosphatase"/>
    <property type="match status" value="1"/>
</dbReference>
<dbReference type="Gene3D" id="3.90.950.10">
    <property type="match status" value="1"/>
</dbReference>
<dbReference type="HAMAP" id="MF_01405">
    <property type="entry name" value="Non_canon_purine_NTPase"/>
    <property type="match status" value="1"/>
</dbReference>
<dbReference type="InterPro" id="IPR020922">
    <property type="entry name" value="dITP/XTP_pyrophosphatase"/>
</dbReference>
<dbReference type="InterPro" id="IPR029001">
    <property type="entry name" value="ITPase-like_fam"/>
</dbReference>
<dbReference type="InterPro" id="IPR002637">
    <property type="entry name" value="RdgB/HAM1"/>
</dbReference>
<dbReference type="NCBIfam" id="TIGR00042">
    <property type="entry name" value="RdgB/HAM1 family non-canonical purine NTP pyrophosphatase"/>
    <property type="match status" value="1"/>
</dbReference>
<dbReference type="PANTHER" id="PTHR11067:SF9">
    <property type="entry name" value="INOSINE TRIPHOSPHATE PYROPHOSPHATASE"/>
    <property type="match status" value="1"/>
</dbReference>
<dbReference type="PANTHER" id="PTHR11067">
    <property type="entry name" value="INOSINE TRIPHOSPHATE PYROPHOSPHATASE/HAM1 PROTEIN"/>
    <property type="match status" value="1"/>
</dbReference>
<dbReference type="Pfam" id="PF01725">
    <property type="entry name" value="Ham1p_like"/>
    <property type="match status" value="1"/>
</dbReference>
<dbReference type="SUPFAM" id="SSF52972">
    <property type="entry name" value="ITPase-like"/>
    <property type="match status" value="1"/>
</dbReference>
<keyword id="KW-0378">Hydrolase</keyword>
<keyword id="KW-0460">Magnesium</keyword>
<keyword id="KW-0479">Metal-binding</keyword>
<keyword id="KW-0546">Nucleotide metabolism</keyword>
<keyword id="KW-0547">Nucleotide-binding</keyword>
<keyword id="KW-1185">Reference proteome</keyword>